<comment type="subcellular location">
    <subcellularLocation>
        <location evidence="2 4">Mitochondrion</location>
    </subcellularLocation>
</comment>
<comment type="disruption phenotype">
    <text evidence="5">Increases frequency of mitochondrial genome loss.</text>
</comment>
<comment type="miscellaneous">
    <text evidence="3">Present with 319 molecules/cell in log phase SD medium.</text>
</comment>
<comment type="similarity">
    <text evidence="6">Belongs to the AIM23 family.</text>
</comment>
<protein>
    <recommendedName>
        <fullName>Altered inheritance of mitochondria protein 23, mitochondrial</fullName>
    </recommendedName>
</protein>
<organism>
    <name type="scientific">Saccharomyces cerevisiae (strain ATCC 204508 / S288c)</name>
    <name type="common">Baker's yeast</name>
    <dbReference type="NCBI Taxonomy" id="559292"/>
    <lineage>
        <taxon>Eukaryota</taxon>
        <taxon>Fungi</taxon>
        <taxon>Dikarya</taxon>
        <taxon>Ascomycota</taxon>
        <taxon>Saccharomycotina</taxon>
        <taxon>Saccharomycetes</taxon>
        <taxon>Saccharomycetales</taxon>
        <taxon>Saccharomycetaceae</taxon>
        <taxon>Saccharomyces</taxon>
    </lineage>
</organism>
<gene>
    <name type="primary">AIM23</name>
    <name type="ordered locus">YJL131C</name>
    <name type="ORF">J0682</name>
</gene>
<dbReference type="EMBL" id="X87371">
    <property type="protein sequence ID" value="CAA60824.1"/>
    <property type="molecule type" value="Genomic_DNA"/>
</dbReference>
<dbReference type="EMBL" id="Z49406">
    <property type="protein sequence ID" value="CAA89426.1"/>
    <property type="molecule type" value="Genomic_DNA"/>
</dbReference>
<dbReference type="EMBL" id="M27174">
    <property type="status" value="NOT_ANNOTATED_CDS"/>
    <property type="molecule type" value="Genomic_DNA"/>
</dbReference>
<dbReference type="EMBL" id="BK006943">
    <property type="protein sequence ID" value="DAA08670.1"/>
    <property type="molecule type" value="Genomic_DNA"/>
</dbReference>
<dbReference type="PIR" id="S55181">
    <property type="entry name" value="S55181"/>
</dbReference>
<dbReference type="RefSeq" id="NP_012404.1">
    <property type="nucleotide sequence ID" value="NM_001181564.1"/>
</dbReference>
<dbReference type="PDB" id="8OM3">
    <property type="method" value="EM"/>
    <property type="resolution" value="2.87 A"/>
    <property type="chains" value="d=1-356"/>
</dbReference>
<dbReference type="PDBsum" id="8OM3"/>
<dbReference type="EMDB" id="EMD-16967"/>
<dbReference type="SMR" id="P47015"/>
<dbReference type="BioGRID" id="33625">
    <property type="interactions" value="181"/>
</dbReference>
<dbReference type="DIP" id="DIP-5684N"/>
<dbReference type="FunCoup" id="P47015">
    <property type="interactions" value="55"/>
</dbReference>
<dbReference type="IntAct" id="P47015">
    <property type="interactions" value="37"/>
</dbReference>
<dbReference type="MINT" id="P47015"/>
<dbReference type="STRING" id="4932.YJL131C"/>
<dbReference type="PaxDb" id="4932-YJL131C"/>
<dbReference type="PeptideAtlas" id="P47015"/>
<dbReference type="EnsemblFungi" id="YJL131C_mRNA">
    <property type="protein sequence ID" value="YJL131C"/>
    <property type="gene ID" value="YJL131C"/>
</dbReference>
<dbReference type="GeneID" id="853310"/>
<dbReference type="KEGG" id="sce:YJL131C"/>
<dbReference type="AGR" id="SGD:S000003667"/>
<dbReference type="SGD" id="S000003667">
    <property type="gene designation" value="AIM23"/>
</dbReference>
<dbReference type="VEuPathDB" id="FungiDB:YJL131C"/>
<dbReference type="eggNOG" id="ENOG502RY27">
    <property type="taxonomic scope" value="Eukaryota"/>
</dbReference>
<dbReference type="HOGENOM" id="CLU_057910_0_0_1"/>
<dbReference type="InParanoid" id="P47015"/>
<dbReference type="OMA" id="KVSWQIS"/>
<dbReference type="OrthoDB" id="3996489at2759"/>
<dbReference type="BioCyc" id="YEAST:G3O-31580-MONOMER"/>
<dbReference type="BioGRID-ORCS" id="853310">
    <property type="hits" value="1 hit in 10 CRISPR screens"/>
</dbReference>
<dbReference type="PRO" id="PR:P47015"/>
<dbReference type="Proteomes" id="UP000002311">
    <property type="component" value="Chromosome X"/>
</dbReference>
<dbReference type="RNAct" id="P47015">
    <property type="molecule type" value="protein"/>
</dbReference>
<dbReference type="GO" id="GO:0005739">
    <property type="term" value="C:mitochondrion"/>
    <property type="evidence" value="ECO:0007005"/>
    <property type="project" value="SGD"/>
</dbReference>
<dbReference type="GO" id="GO:0097177">
    <property type="term" value="F:mitochondrial ribosome binding"/>
    <property type="evidence" value="ECO:0000314"/>
    <property type="project" value="SGD"/>
</dbReference>
<dbReference type="GO" id="GO:0003743">
    <property type="term" value="F:translation initiation factor activity"/>
    <property type="evidence" value="ECO:0000250"/>
    <property type="project" value="SGD"/>
</dbReference>
<dbReference type="GO" id="GO:0070124">
    <property type="term" value="P:mitochondrial translational initiation"/>
    <property type="evidence" value="ECO:0000316"/>
    <property type="project" value="SGD"/>
</dbReference>
<dbReference type="InterPro" id="IPR029427">
    <property type="entry name" value="AIM23"/>
</dbReference>
<dbReference type="Pfam" id="PF14877">
    <property type="entry name" value="mIF3"/>
    <property type="match status" value="1"/>
</dbReference>
<evidence type="ECO:0000255" key="1"/>
<evidence type="ECO:0000269" key="2">
    <source>
    </source>
</evidence>
<evidence type="ECO:0000269" key="3">
    <source>
    </source>
</evidence>
<evidence type="ECO:0000269" key="4">
    <source>
    </source>
</evidence>
<evidence type="ECO:0000269" key="5">
    <source>
    </source>
</evidence>
<evidence type="ECO:0000305" key="6"/>
<feature type="transit peptide" description="Mitochondrion" evidence="1">
    <location>
        <begin position="1"/>
        <end position="32"/>
    </location>
</feature>
<feature type="chain" id="PRO_0000203039" description="Altered inheritance of mitochondria protein 23, mitochondrial">
    <location>
        <begin position="33"/>
        <end position="356"/>
    </location>
</feature>
<accession>P47015</accession>
<accession>D6VW54</accession>
<reference key="1">
    <citation type="journal article" date="1996" name="Yeast">
        <title>Sequence analysis of a 40.7 kb segment from the left arm of yeast chromosome X reveals 14 known genes and 13 new open reading frames including homologues of genes clustered on the right arm of chromosome XI.</title>
        <authorList>
            <person name="Katsoulou C."/>
            <person name="Tzermia M."/>
            <person name="Tavernarakis N."/>
            <person name="Alexandraki D."/>
        </authorList>
    </citation>
    <scope>NUCLEOTIDE SEQUENCE [GENOMIC DNA]</scope>
    <source>
        <strain>ATCC 96604 / S288c / FY1679</strain>
    </source>
</reference>
<reference key="2">
    <citation type="journal article" date="1996" name="EMBO J.">
        <title>Complete nucleotide sequence of Saccharomyces cerevisiae chromosome X.</title>
        <authorList>
            <person name="Galibert F."/>
            <person name="Alexandraki D."/>
            <person name="Baur A."/>
            <person name="Boles E."/>
            <person name="Chalwatzis N."/>
            <person name="Chuat J.-C."/>
            <person name="Coster F."/>
            <person name="Cziepluch C."/>
            <person name="de Haan M."/>
            <person name="Domdey H."/>
            <person name="Durand P."/>
            <person name="Entian K.-D."/>
            <person name="Gatius M."/>
            <person name="Goffeau A."/>
            <person name="Grivell L.A."/>
            <person name="Hennemann A."/>
            <person name="Herbert C.J."/>
            <person name="Heumann K."/>
            <person name="Hilger F."/>
            <person name="Hollenberg C.P."/>
            <person name="Huang M.-E."/>
            <person name="Jacq C."/>
            <person name="Jauniaux J.-C."/>
            <person name="Katsoulou C."/>
            <person name="Kirchrath L."/>
            <person name="Kleine K."/>
            <person name="Kordes E."/>
            <person name="Koetter P."/>
            <person name="Liebl S."/>
            <person name="Louis E.J."/>
            <person name="Manus V."/>
            <person name="Mewes H.-W."/>
            <person name="Miosga T."/>
            <person name="Obermaier B."/>
            <person name="Perea J."/>
            <person name="Pohl T.M."/>
            <person name="Portetelle D."/>
            <person name="Pujol A."/>
            <person name="Purnelle B."/>
            <person name="Ramezani Rad M."/>
            <person name="Rasmussen S.W."/>
            <person name="Rose M."/>
            <person name="Rossau R."/>
            <person name="Schaaff-Gerstenschlaeger I."/>
            <person name="Smits P.H.M."/>
            <person name="Scarcez T."/>
            <person name="Soriano N."/>
            <person name="To Van D."/>
            <person name="Tzermia M."/>
            <person name="Van Broekhoven A."/>
            <person name="Vandenbol M."/>
            <person name="Wedler H."/>
            <person name="von Wettstein D."/>
            <person name="Wambutt R."/>
            <person name="Zagulski M."/>
            <person name="Zollner A."/>
            <person name="Karpfinger-Hartl L."/>
        </authorList>
    </citation>
    <scope>NUCLEOTIDE SEQUENCE [LARGE SCALE GENOMIC DNA]</scope>
    <source>
        <strain>ATCC 204508 / S288c</strain>
    </source>
</reference>
<reference key="3">
    <citation type="journal article" date="2014" name="G3 (Bethesda)">
        <title>The reference genome sequence of Saccharomyces cerevisiae: Then and now.</title>
        <authorList>
            <person name="Engel S.R."/>
            <person name="Dietrich F.S."/>
            <person name="Fisk D.G."/>
            <person name="Binkley G."/>
            <person name="Balakrishnan R."/>
            <person name="Costanzo M.C."/>
            <person name="Dwight S.S."/>
            <person name="Hitz B.C."/>
            <person name="Karra K."/>
            <person name="Nash R.S."/>
            <person name="Weng S."/>
            <person name="Wong E.D."/>
            <person name="Lloyd P."/>
            <person name="Skrzypek M.S."/>
            <person name="Miyasato S.R."/>
            <person name="Simison M."/>
            <person name="Cherry J.M."/>
        </authorList>
    </citation>
    <scope>GENOME REANNOTATION</scope>
    <source>
        <strain>ATCC 204508 / S288c</strain>
    </source>
</reference>
<reference key="4">
    <citation type="journal article" date="1989" name="Gene">
        <title>Organization of the yeast URA2 gene: identification of a defective dihydroorotase-like domain in the multifunctional carbamoylphosphate synthetase-aspartate transcarbamylase complex.</title>
        <authorList>
            <person name="Souciet J.-L."/>
            <person name="Nagy M."/>
            <person name="le Gouar M."/>
            <person name="Lacroute F."/>
            <person name="Potier S."/>
        </authorList>
    </citation>
    <scope>NUCLEOTIDE SEQUENCE [GENOMIC DNA] OF 1-124</scope>
    <source>
        <strain>ATCC 28383 / FL100 / VTT C-80102</strain>
    </source>
</reference>
<reference key="5">
    <citation type="journal article" date="2003" name="Nature">
        <title>Global analysis of protein localization in budding yeast.</title>
        <authorList>
            <person name="Huh W.-K."/>
            <person name="Falvo J.V."/>
            <person name="Gerke L.C."/>
            <person name="Carroll A.S."/>
            <person name="Howson R.W."/>
            <person name="Weissman J.S."/>
            <person name="O'Shea E.K."/>
        </authorList>
    </citation>
    <scope>SUBCELLULAR LOCATION [LARGE SCALE ANALYSIS]</scope>
</reference>
<reference key="6">
    <citation type="journal article" date="2003" name="Nature">
        <title>Global analysis of protein expression in yeast.</title>
        <authorList>
            <person name="Ghaemmaghami S."/>
            <person name="Huh W.-K."/>
            <person name="Bower K."/>
            <person name="Howson R.W."/>
            <person name="Belle A."/>
            <person name="Dephoure N."/>
            <person name="O'Shea E.K."/>
            <person name="Weissman J.S."/>
        </authorList>
    </citation>
    <scope>LEVEL OF PROTEIN EXPRESSION [LARGE SCALE ANALYSIS]</scope>
</reference>
<reference key="7">
    <citation type="journal article" date="2006" name="J. Proteome Res.">
        <title>Toward the complete yeast mitochondrial proteome: multidimensional separation techniques for mitochondrial proteomics.</title>
        <authorList>
            <person name="Reinders J."/>
            <person name="Zahedi R.P."/>
            <person name="Pfanner N."/>
            <person name="Meisinger C."/>
            <person name="Sickmann A."/>
        </authorList>
    </citation>
    <scope>SUBCELLULAR LOCATION [LARGE SCALE ANALYSIS]</scope>
    <scope>IDENTIFICATION BY MASS SPECTROMETRY</scope>
</reference>
<reference key="8">
    <citation type="journal article" date="2009" name="PLoS Genet.">
        <title>Computationally driven, quantitative experiments discover genes required for mitochondrial biogenesis.</title>
        <authorList>
            <person name="Hess D.C."/>
            <person name="Myers C.L."/>
            <person name="Huttenhower C."/>
            <person name="Hibbs M.A."/>
            <person name="Hayes A.P."/>
            <person name="Paw J."/>
            <person name="Clore J.J."/>
            <person name="Mendoza R.M."/>
            <person name="Luis B.S."/>
            <person name="Nislow C."/>
            <person name="Giaever G."/>
            <person name="Costanzo M."/>
            <person name="Troyanskaya O.G."/>
            <person name="Caudy A.A."/>
        </authorList>
    </citation>
    <scope>DISRUPTION PHENOTYPE</scope>
</reference>
<keyword id="KW-0002">3D-structure</keyword>
<keyword id="KW-0496">Mitochondrion</keyword>
<keyword id="KW-1185">Reference proteome</keyword>
<keyword id="KW-0809">Transit peptide</keyword>
<name>AIM23_YEAST</name>
<sequence length="356" mass="41461">MLKVPLSDVLSQKMLFLKSFRYFHCTKYFSRDNASSTTDIFRNAMKRKRELANLKEQSHGNVARNAAFPKEYIKRPKQVPRNATNRKKILITWSTGTDRAKEAANSVVSEIFKKNHKGNIKVVDPTTHRIEASNIRYFAKGIDLDKVGLSIVNVEQIDNENQIPLVKIVESRVALKKYSDFLAKKKEKELMELGVLNKSYKNLVTDKKEDNLKHIKISWQIESDDLKRQKAHEIVSLLKKGNKVTLYLDDKNNINSNNWLENFEELDRSQKGEPPRLPESVFQKRAAVLETLKEIVSEYANDPVLLGNMNSKMIMKLIPKDVKPQNNDKRALKELRKKERQEKLQKRIQRKKMNEM</sequence>
<proteinExistence type="evidence at protein level"/>